<dbReference type="EC" id="6.1.1.16" evidence="1"/>
<dbReference type="EMBL" id="CP000230">
    <property type="protein sequence ID" value="ABC21493.1"/>
    <property type="molecule type" value="Genomic_DNA"/>
</dbReference>
<dbReference type="RefSeq" id="WP_011388447.1">
    <property type="nucleotide sequence ID" value="NC_007643.1"/>
</dbReference>
<dbReference type="RefSeq" id="YP_425780.1">
    <property type="nucleotide sequence ID" value="NC_007643.1"/>
</dbReference>
<dbReference type="SMR" id="Q2RWK2"/>
<dbReference type="STRING" id="269796.Rru_A0689"/>
<dbReference type="EnsemblBacteria" id="ABC21493">
    <property type="protein sequence ID" value="ABC21493"/>
    <property type="gene ID" value="Rru_A0689"/>
</dbReference>
<dbReference type="KEGG" id="rru:Rru_A0689"/>
<dbReference type="PATRIC" id="fig|269796.9.peg.742"/>
<dbReference type="eggNOG" id="COG0215">
    <property type="taxonomic scope" value="Bacteria"/>
</dbReference>
<dbReference type="HOGENOM" id="CLU_013528_0_1_5"/>
<dbReference type="PhylomeDB" id="Q2RWK2"/>
<dbReference type="Proteomes" id="UP000001929">
    <property type="component" value="Chromosome"/>
</dbReference>
<dbReference type="GO" id="GO:0005829">
    <property type="term" value="C:cytosol"/>
    <property type="evidence" value="ECO:0007669"/>
    <property type="project" value="TreeGrafter"/>
</dbReference>
<dbReference type="GO" id="GO:0005524">
    <property type="term" value="F:ATP binding"/>
    <property type="evidence" value="ECO:0007669"/>
    <property type="project" value="UniProtKB-UniRule"/>
</dbReference>
<dbReference type="GO" id="GO:0004817">
    <property type="term" value="F:cysteine-tRNA ligase activity"/>
    <property type="evidence" value="ECO:0007669"/>
    <property type="project" value="UniProtKB-UniRule"/>
</dbReference>
<dbReference type="GO" id="GO:0008270">
    <property type="term" value="F:zinc ion binding"/>
    <property type="evidence" value="ECO:0007669"/>
    <property type="project" value="UniProtKB-UniRule"/>
</dbReference>
<dbReference type="GO" id="GO:0006423">
    <property type="term" value="P:cysteinyl-tRNA aminoacylation"/>
    <property type="evidence" value="ECO:0007669"/>
    <property type="project" value="UniProtKB-UniRule"/>
</dbReference>
<dbReference type="CDD" id="cd00672">
    <property type="entry name" value="CysRS_core"/>
    <property type="match status" value="1"/>
</dbReference>
<dbReference type="FunFam" id="3.40.50.620:FF:000068">
    <property type="entry name" value="Cysteine--tRNA ligase"/>
    <property type="match status" value="1"/>
</dbReference>
<dbReference type="Gene3D" id="1.20.120.1910">
    <property type="entry name" value="Cysteine-tRNA ligase, C-terminal anti-codon recognition domain"/>
    <property type="match status" value="1"/>
</dbReference>
<dbReference type="Gene3D" id="3.40.50.620">
    <property type="entry name" value="HUPs"/>
    <property type="match status" value="1"/>
</dbReference>
<dbReference type="HAMAP" id="MF_00041">
    <property type="entry name" value="Cys_tRNA_synth"/>
    <property type="match status" value="1"/>
</dbReference>
<dbReference type="InterPro" id="IPR015803">
    <property type="entry name" value="Cys-tRNA-ligase"/>
</dbReference>
<dbReference type="InterPro" id="IPR015273">
    <property type="entry name" value="Cys-tRNA-synt_Ia_DALR"/>
</dbReference>
<dbReference type="InterPro" id="IPR024909">
    <property type="entry name" value="Cys-tRNA/MSH_ligase"/>
</dbReference>
<dbReference type="InterPro" id="IPR056411">
    <property type="entry name" value="CysS_C"/>
</dbReference>
<dbReference type="InterPro" id="IPR014729">
    <property type="entry name" value="Rossmann-like_a/b/a_fold"/>
</dbReference>
<dbReference type="InterPro" id="IPR032678">
    <property type="entry name" value="tRNA-synt_1_cat_dom"/>
</dbReference>
<dbReference type="InterPro" id="IPR009080">
    <property type="entry name" value="tRNAsynth_Ia_anticodon-bd"/>
</dbReference>
<dbReference type="NCBIfam" id="TIGR00435">
    <property type="entry name" value="cysS"/>
    <property type="match status" value="1"/>
</dbReference>
<dbReference type="PANTHER" id="PTHR10890:SF3">
    <property type="entry name" value="CYSTEINE--TRNA LIGASE, CYTOPLASMIC"/>
    <property type="match status" value="1"/>
</dbReference>
<dbReference type="PANTHER" id="PTHR10890">
    <property type="entry name" value="CYSTEINYL-TRNA SYNTHETASE"/>
    <property type="match status" value="1"/>
</dbReference>
<dbReference type="Pfam" id="PF23493">
    <property type="entry name" value="CysS_C"/>
    <property type="match status" value="1"/>
</dbReference>
<dbReference type="Pfam" id="PF09190">
    <property type="entry name" value="DALR_2"/>
    <property type="match status" value="1"/>
</dbReference>
<dbReference type="Pfam" id="PF01406">
    <property type="entry name" value="tRNA-synt_1e"/>
    <property type="match status" value="1"/>
</dbReference>
<dbReference type="PRINTS" id="PR00983">
    <property type="entry name" value="TRNASYNTHCYS"/>
</dbReference>
<dbReference type="SMART" id="SM00840">
    <property type="entry name" value="DALR_2"/>
    <property type="match status" value="1"/>
</dbReference>
<dbReference type="SUPFAM" id="SSF47323">
    <property type="entry name" value="Anticodon-binding domain of a subclass of class I aminoacyl-tRNA synthetases"/>
    <property type="match status" value="1"/>
</dbReference>
<dbReference type="SUPFAM" id="SSF52374">
    <property type="entry name" value="Nucleotidylyl transferase"/>
    <property type="match status" value="1"/>
</dbReference>
<keyword id="KW-0030">Aminoacyl-tRNA synthetase</keyword>
<keyword id="KW-0067">ATP-binding</keyword>
<keyword id="KW-0963">Cytoplasm</keyword>
<keyword id="KW-0436">Ligase</keyword>
<keyword id="KW-0479">Metal-binding</keyword>
<keyword id="KW-0547">Nucleotide-binding</keyword>
<keyword id="KW-0648">Protein biosynthesis</keyword>
<keyword id="KW-1185">Reference proteome</keyword>
<keyword id="KW-0862">Zinc</keyword>
<accession>Q2RWK2</accession>
<name>SYC_RHORT</name>
<sequence>MTLHIHNTMTRTKEVFEPLDPGHVRLYVCGPTVYDRAHIGNARPVIVFDLLARLLRRLYPQVTYVRNITDVDDKINARASASGRTIGEITEETTRLFHEDMAELGALPPDVEPRATAHIADMVAMIERLIAKGHAYEAEGHVLFSVPSMGAYGSLSGRSMDDMIAGARVEVAPYKRDPADFVLWKPSDASLPGWDSPWGRGRPGWHIECSAMSSRYLGPSFDIHGGGLDLIFPHHENEIAQSVCCNGPGTFARYWMHNGYLMVEGEKMSKSLGNFVTVRDLLDQAPGEAMRLAMLGTHYRQPFDWTAEGLEQARRGLDRLYSALRRVAGIAASPAEVPEGVMAALCDDLNTPKALAEVYDLLGVLNRATTTEEQAKAKGALLAAGALLGLFQADPEVWLCGAGTGEEEGLAARVEDLICQRKAARQARDFARADAIRDELTQAGIVLEDGPNGTTWRKA</sequence>
<protein>
    <recommendedName>
        <fullName evidence="1">Cysteine--tRNA ligase</fullName>
        <ecNumber evidence="1">6.1.1.16</ecNumber>
    </recommendedName>
    <alternativeName>
        <fullName evidence="1">Cysteinyl-tRNA synthetase</fullName>
        <shortName evidence="1">CysRS</shortName>
    </alternativeName>
</protein>
<gene>
    <name evidence="1" type="primary">cysS</name>
    <name type="ordered locus">Rru_A0689</name>
</gene>
<organism>
    <name type="scientific">Rhodospirillum rubrum (strain ATCC 11170 / ATH 1.1.1 / DSM 467 / LMG 4362 / NCIMB 8255 / S1)</name>
    <dbReference type="NCBI Taxonomy" id="269796"/>
    <lineage>
        <taxon>Bacteria</taxon>
        <taxon>Pseudomonadati</taxon>
        <taxon>Pseudomonadota</taxon>
        <taxon>Alphaproteobacteria</taxon>
        <taxon>Rhodospirillales</taxon>
        <taxon>Rhodospirillaceae</taxon>
        <taxon>Rhodospirillum</taxon>
    </lineage>
</organism>
<feature type="chain" id="PRO_0000240948" description="Cysteine--tRNA ligase">
    <location>
        <begin position="1"/>
        <end position="459"/>
    </location>
</feature>
<feature type="short sequence motif" description="'HIGH' region">
    <location>
        <begin position="31"/>
        <end position="41"/>
    </location>
</feature>
<feature type="short sequence motif" description="'KMSKS' region">
    <location>
        <begin position="267"/>
        <end position="271"/>
    </location>
</feature>
<feature type="binding site" evidence="1">
    <location>
        <position position="29"/>
    </location>
    <ligand>
        <name>Zn(2+)</name>
        <dbReference type="ChEBI" id="CHEBI:29105"/>
    </ligand>
</feature>
<feature type="binding site" evidence="1">
    <location>
        <position position="209"/>
    </location>
    <ligand>
        <name>Zn(2+)</name>
        <dbReference type="ChEBI" id="CHEBI:29105"/>
    </ligand>
</feature>
<feature type="binding site" evidence="1">
    <location>
        <position position="234"/>
    </location>
    <ligand>
        <name>Zn(2+)</name>
        <dbReference type="ChEBI" id="CHEBI:29105"/>
    </ligand>
</feature>
<feature type="binding site" evidence="1">
    <location>
        <position position="238"/>
    </location>
    <ligand>
        <name>Zn(2+)</name>
        <dbReference type="ChEBI" id="CHEBI:29105"/>
    </ligand>
</feature>
<feature type="binding site" evidence="1">
    <location>
        <position position="270"/>
    </location>
    <ligand>
        <name>ATP</name>
        <dbReference type="ChEBI" id="CHEBI:30616"/>
    </ligand>
</feature>
<proteinExistence type="inferred from homology"/>
<evidence type="ECO:0000255" key="1">
    <source>
        <dbReference type="HAMAP-Rule" id="MF_00041"/>
    </source>
</evidence>
<reference key="1">
    <citation type="journal article" date="2011" name="Stand. Genomic Sci.">
        <title>Complete genome sequence of Rhodospirillum rubrum type strain (S1).</title>
        <authorList>
            <person name="Munk A.C."/>
            <person name="Copeland A."/>
            <person name="Lucas S."/>
            <person name="Lapidus A."/>
            <person name="Del Rio T.G."/>
            <person name="Barry K."/>
            <person name="Detter J.C."/>
            <person name="Hammon N."/>
            <person name="Israni S."/>
            <person name="Pitluck S."/>
            <person name="Brettin T."/>
            <person name="Bruce D."/>
            <person name="Han C."/>
            <person name="Tapia R."/>
            <person name="Gilna P."/>
            <person name="Schmutz J."/>
            <person name="Larimer F."/>
            <person name="Land M."/>
            <person name="Kyrpides N.C."/>
            <person name="Mavromatis K."/>
            <person name="Richardson P."/>
            <person name="Rohde M."/>
            <person name="Goeker M."/>
            <person name="Klenk H.P."/>
            <person name="Zhang Y."/>
            <person name="Roberts G.P."/>
            <person name="Reslewic S."/>
            <person name="Schwartz D.C."/>
        </authorList>
    </citation>
    <scope>NUCLEOTIDE SEQUENCE [LARGE SCALE GENOMIC DNA]</scope>
    <source>
        <strain>ATCC 11170 / ATH 1.1.1 / DSM 467 / LMG 4362 / NCIMB 8255 / S1</strain>
    </source>
</reference>
<comment type="catalytic activity">
    <reaction evidence="1">
        <text>tRNA(Cys) + L-cysteine + ATP = L-cysteinyl-tRNA(Cys) + AMP + diphosphate</text>
        <dbReference type="Rhea" id="RHEA:17773"/>
        <dbReference type="Rhea" id="RHEA-COMP:9661"/>
        <dbReference type="Rhea" id="RHEA-COMP:9679"/>
        <dbReference type="ChEBI" id="CHEBI:30616"/>
        <dbReference type="ChEBI" id="CHEBI:33019"/>
        <dbReference type="ChEBI" id="CHEBI:35235"/>
        <dbReference type="ChEBI" id="CHEBI:78442"/>
        <dbReference type="ChEBI" id="CHEBI:78517"/>
        <dbReference type="ChEBI" id="CHEBI:456215"/>
        <dbReference type="EC" id="6.1.1.16"/>
    </reaction>
</comment>
<comment type="cofactor">
    <cofactor evidence="1">
        <name>Zn(2+)</name>
        <dbReference type="ChEBI" id="CHEBI:29105"/>
    </cofactor>
    <text evidence="1">Binds 1 zinc ion per subunit.</text>
</comment>
<comment type="subunit">
    <text evidence="1">Monomer.</text>
</comment>
<comment type="subcellular location">
    <subcellularLocation>
        <location evidence="1">Cytoplasm</location>
    </subcellularLocation>
</comment>
<comment type="similarity">
    <text evidence="1">Belongs to the class-I aminoacyl-tRNA synthetase family.</text>
</comment>